<gene>
    <name evidence="7 13" type="primary">SLC24A1</name>
    <name evidence="9" type="synonym">KIAA0702</name>
    <name evidence="10" type="synonym">NCKX1</name>
</gene>
<dbReference type="EMBL" id="AF062921">
    <property type="protein sequence ID" value="AAC16732.1"/>
    <property type="molecule type" value="mRNA"/>
</dbReference>
<dbReference type="EMBL" id="AF062922">
    <property type="protein sequence ID" value="AAC77912.1"/>
    <property type="molecule type" value="mRNA"/>
</dbReference>
<dbReference type="EMBL" id="AF026132">
    <property type="protein sequence ID" value="AAB97832.1"/>
    <property type="molecule type" value="mRNA"/>
</dbReference>
<dbReference type="EMBL" id="AC011939">
    <property type="status" value="NOT_ANNOTATED_CDS"/>
    <property type="molecule type" value="Genomic_DNA"/>
</dbReference>
<dbReference type="EMBL" id="AC027220">
    <property type="status" value="NOT_ANNOTATED_CDS"/>
    <property type="molecule type" value="Genomic_DNA"/>
</dbReference>
<dbReference type="EMBL" id="BC117263">
    <property type="protein sequence ID" value="AAI17264.1"/>
    <property type="molecule type" value="mRNA"/>
</dbReference>
<dbReference type="EMBL" id="BC143375">
    <property type="protein sequence ID" value="AAI43376.1"/>
    <property type="molecule type" value="mRNA"/>
</dbReference>
<dbReference type="EMBL" id="AB014602">
    <property type="protein sequence ID" value="BAA31677.2"/>
    <property type="status" value="ALT_SEQ"/>
    <property type="molecule type" value="mRNA"/>
</dbReference>
<dbReference type="CCDS" id="CCDS45284.1">
    <molecule id="O60721-1"/>
</dbReference>
<dbReference type="CCDS" id="CCDS73742.1">
    <molecule id="O60721-3"/>
</dbReference>
<dbReference type="CCDS" id="CCDS73743.1">
    <molecule id="O60721-2"/>
</dbReference>
<dbReference type="RefSeq" id="NP_001287960.1">
    <molecule id="O60721-3"/>
    <property type="nucleotide sequence ID" value="NM_001301031.1"/>
</dbReference>
<dbReference type="RefSeq" id="NP_001287961.1">
    <molecule id="O60721-2"/>
    <property type="nucleotide sequence ID" value="NM_001301032.1"/>
</dbReference>
<dbReference type="RefSeq" id="NP_001287962.1">
    <property type="nucleotide sequence ID" value="NM_001301033.1"/>
</dbReference>
<dbReference type="RefSeq" id="NP_004718.1">
    <molecule id="O60721-1"/>
    <property type="nucleotide sequence ID" value="NM_004727.3"/>
</dbReference>
<dbReference type="RefSeq" id="XP_005254835.1">
    <property type="nucleotide sequence ID" value="XM_005254778.3"/>
</dbReference>
<dbReference type="RefSeq" id="XP_011520521.1">
    <molecule id="O60721-1"/>
    <property type="nucleotide sequence ID" value="XM_011522219.2"/>
</dbReference>
<dbReference type="RefSeq" id="XP_011520522.1">
    <property type="nucleotide sequence ID" value="XM_011522220.2"/>
</dbReference>
<dbReference type="RefSeq" id="XP_011520523.1">
    <molecule id="O60721-3"/>
    <property type="nucleotide sequence ID" value="XM_011522221.4"/>
</dbReference>
<dbReference type="RefSeq" id="XP_024305871.1">
    <molecule id="O60721-1"/>
    <property type="nucleotide sequence ID" value="XM_024450103.2"/>
</dbReference>
<dbReference type="RefSeq" id="XP_024305872.1">
    <molecule id="O60721-1"/>
    <property type="nucleotide sequence ID" value="XM_024450104.2"/>
</dbReference>
<dbReference type="RefSeq" id="XP_024305873.1">
    <molecule id="O60721-1"/>
    <property type="nucleotide sequence ID" value="XM_024450105.2"/>
</dbReference>
<dbReference type="RefSeq" id="XP_047289281.1">
    <molecule id="O60721-2"/>
    <property type="nucleotide sequence ID" value="XM_047433325.1"/>
</dbReference>
<dbReference type="RefSeq" id="XP_047289282.1">
    <molecule id="O60721-2"/>
    <property type="nucleotide sequence ID" value="XM_047433326.1"/>
</dbReference>
<dbReference type="RefSeq" id="XP_054235165.1">
    <molecule id="O60721-1"/>
    <property type="nucleotide sequence ID" value="XM_054379190.1"/>
</dbReference>
<dbReference type="RefSeq" id="XP_054235166.1">
    <molecule id="O60721-1"/>
    <property type="nucleotide sequence ID" value="XM_054379191.1"/>
</dbReference>
<dbReference type="RefSeq" id="XP_054235167.1">
    <molecule id="O60721-1"/>
    <property type="nucleotide sequence ID" value="XM_054379192.1"/>
</dbReference>
<dbReference type="RefSeq" id="XP_054235168.1">
    <molecule id="O60721-1"/>
    <property type="nucleotide sequence ID" value="XM_054379193.1"/>
</dbReference>
<dbReference type="RefSeq" id="XP_054235169.1">
    <molecule id="O60721-2"/>
    <property type="nucleotide sequence ID" value="XM_054379194.1"/>
</dbReference>
<dbReference type="RefSeq" id="XP_054235170.1">
    <molecule id="O60721-2"/>
    <property type="nucleotide sequence ID" value="XM_054379195.1"/>
</dbReference>
<dbReference type="RefSeq" id="XP_054235171.1">
    <molecule id="O60721-3"/>
    <property type="nucleotide sequence ID" value="XM_054379196.1"/>
</dbReference>
<dbReference type="BioGRID" id="114624">
    <property type="interactions" value="4"/>
</dbReference>
<dbReference type="FunCoup" id="O60721">
    <property type="interactions" value="247"/>
</dbReference>
<dbReference type="IntAct" id="O60721">
    <property type="interactions" value="5"/>
</dbReference>
<dbReference type="STRING" id="9606.ENSP00000261892"/>
<dbReference type="TCDB" id="2.A.19.4.9">
    <property type="family name" value="the ca(2+):cation antiporter (caca) family"/>
</dbReference>
<dbReference type="GlyCosmos" id="O60721">
    <property type="glycosylation" value="1 site, No reported glycans"/>
</dbReference>
<dbReference type="GlyGen" id="O60721">
    <property type="glycosylation" value="4 sites"/>
</dbReference>
<dbReference type="iPTMnet" id="O60721"/>
<dbReference type="PhosphoSitePlus" id="O60721"/>
<dbReference type="BioMuta" id="SLC24A1"/>
<dbReference type="MassIVE" id="O60721"/>
<dbReference type="PaxDb" id="9606-ENSP00000261892"/>
<dbReference type="PeptideAtlas" id="O60721"/>
<dbReference type="ProteomicsDB" id="49569">
    <molecule id="O60721-1"/>
</dbReference>
<dbReference type="ProteomicsDB" id="49570">
    <molecule id="O60721-2"/>
</dbReference>
<dbReference type="ProteomicsDB" id="61158"/>
<dbReference type="Antibodypedia" id="26029">
    <property type="antibodies" value="129 antibodies from 23 providers"/>
</dbReference>
<dbReference type="DNASU" id="9187"/>
<dbReference type="Ensembl" id="ENST00000261892.11">
    <molecule id="O60721-1"/>
    <property type="protein sequence ID" value="ENSP00000261892.6"/>
    <property type="gene ID" value="ENSG00000074621.14"/>
</dbReference>
<dbReference type="Ensembl" id="ENST00000339868.10">
    <molecule id="O60721-3"/>
    <property type="protein sequence ID" value="ENSP00000341837.7"/>
    <property type="gene ID" value="ENSG00000074621.14"/>
</dbReference>
<dbReference type="Ensembl" id="ENST00000399033.8">
    <molecule id="O60721-3"/>
    <property type="protein sequence ID" value="ENSP00000381991.4"/>
    <property type="gene ID" value="ENSG00000074621.14"/>
</dbReference>
<dbReference type="Ensembl" id="ENST00000546330.1">
    <molecule id="O60721-2"/>
    <property type="protein sequence ID" value="ENSP00000439190.1"/>
    <property type="gene ID" value="ENSG00000074621.14"/>
</dbReference>
<dbReference type="GeneID" id="9187"/>
<dbReference type="KEGG" id="hsa:9187"/>
<dbReference type="MANE-Select" id="ENST00000261892.11">
    <property type="protein sequence ID" value="ENSP00000261892.6"/>
    <property type="RefSeq nucleotide sequence ID" value="NM_004727.3"/>
    <property type="RefSeq protein sequence ID" value="NP_004718.1"/>
</dbReference>
<dbReference type="UCSC" id="uc010ujf.2">
    <molecule id="O60721-1"/>
    <property type="organism name" value="human"/>
</dbReference>
<dbReference type="AGR" id="HGNC:10975"/>
<dbReference type="CTD" id="9187"/>
<dbReference type="DisGeNET" id="9187"/>
<dbReference type="GeneCards" id="SLC24A1"/>
<dbReference type="HGNC" id="HGNC:10975">
    <property type="gene designation" value="SLC24A1"/>
</dbReference>
<dbReference type="HPA" id="ENSG00000074621">
    <property type="expression patterns" value="Tissue enriched (retina)"/>
</dbReference>
<dbReference type="MalaCards" id="SLC24A1"/>
<dbReference type="MIM" id="603617">
    <property type="type" value="gene"/>
</dbReference>
<dbReference type="MIM" id="613830">
    <property type="type" value="phenotype"/>
</dbReference>
<dbReference type="neXtProt" id="NX_O60721"/>
<dbReference type="OpenTargets" id="ENSG00000074621"/>
<dbReference type="Orphanet" id="215">
    <property type="disease" value="Congenital stationary night blindness"/>
</dbReference>
<dbReference type="PharmGKB" id="PA35851"/>
<dbReference type="VEuPathDB" id="HostDB:ENSG00000074621"/>
<dbReference type="eggNOG" id="KOG1307">
    <property type="taxonomic scope" value="Eukaryota"/>
</dbReference>
<dbReference type="GeneTree" id="ENSGT01030000234532"/>
<dbReference type="InParanoid" id="O60721"/>
<dbReference type="OMA" id="HNSTIRT"/>
<dbReference type="OrthoDB" id="2127281at2759"/>
<dbReference type="PAN-GO" id="O60721">
    <property type="GO annotations" value="7 GO annotations based on evolutionary models"/>
</dbReference>
<dbReference type="PhylomeDB" id="O60721"/>
<dbReference type="TreeFam" id="TF318759"/>
<dbReference type="PathwayCommons" id="O60721"/>
<dbReference type="Reactome" id="R-HSA-2485179">
    <property type="pathway name" value="Activation of the phototransduction cascade"/>
</dbReference>
<dbReference type="Reactome" id="R-HSA-425561">
    <property type="pathway name" value="Sodium/Calcium exchangers"/>
</dbReference>
<dbReference type="Reactome" id="R-HSA-5619077">
    <property type="pathway name" value="Defective SLC24A1 causes congenital stationary night blindness 1D (CSNB1D)"/>
</dbReference>
<dbReference type="SignaLink" id="O60721"/>
<dbReference type="SIGNOR" id="O60721"/>
<dbReference type="BioGRID-ORCS" id="9187">
    <property type="hits" value="11 hits in 1152 CRISPR screens"/>
</dbReference>
<dbReference type="ChiTaRS" id="SLC24A1">
    <property type="organism name" value="human"/>
</dbReference>
<dbReference type="GenomeRNAi" id="9187"/>
<dbReference type="Pharos" id="O60721">
    <property type="development level" value="Tbio"/>
</dbReference>
<dbReference type="PRO" id="PR:O60721"/>
<dbReference type="Proteomes" id="UP000005640">
    <property type="component" value="Chromosome 15"/>
</dbReference>
<dbReference type="RNAct" id="O60721">
    <property type="molecule type" value="protein"/>
</dbReference>
<dbReference type="Bgee" id="ENSG00000074621">
    <property type="expression patterns" value="Expressed in endothelial cell and 145 other cell types or tissues"/>
</dbReference>
<dbReference type="ExpressionAtlas" id="O60721">
    <property type="expression patterns" value="baseline and differential"/>
</dbReference>
<dbReference type="GO" id="GO:0016020">
    <property type="term" value="C:membrane"/>
    <property type="evidence" value="ECO:0000304"/>
    <property type="project" value="ProtInc"/>
</dbReference>
<dbReference type="GO" id="GO:0043025">
    <property type="term" value="C:neuronal cell body"/>
    <property type="evidence" value="ECO:0000250"/>
    <property type="project" value="ARUK-UCL"/>
</dbReference>
<dbReference type="GO" id="GO:0019867">
    <property type="term" value="C:outer membrane"/>
    <property type="evidence" value="ECO:0000303"/>
    <property type="project" value="UniProtKB"/>
</dbReference>
<dbReference type="GO" id="GO:0005886">
    <property type="term" value="C:plasma membrane"/>
    <property type="evidence" value="ECO:0000314"/>
    <property type="project" value="ARUK-UCL"/>
</dbReference>
<dbReference type="GO" id="GO:0005262">
    <property type="term" value="F:calcium channel activity"/>
    <property type="evidence" value="ECO:0000318"/>
    <property type="project" value="GO_Central"/>
</dbReference>
<dbReference type="GO" id="GO:0008273">
    <property type="term" value="F:calcium, potassium:sodium antiporter activity"/>
    <property type="evidence" value="ECO:0000314"/>
    <property type="project" value="ARUK-UCL"/>
</dbReference>
<dbReference type="GO" id="GO:0015293">
    <property type="term" value="F:symporter activity"/>
    <property type="evidence" value="ECO:0007669"/>
    <property type="project" value="UniProtKB-KW"/>
</dbReference>
<dbReference type="GO" id="GO:0098703">
    <property type="term" value="P:calcium ion import across plasma membrane"/>
    <property type="evidence" value="ECO:0000250"/>
    <property type="project" value="ARUK-UCL"/>
</dbReference>
<dbReference type="GO" id="GO:0070588">
    <property type="term" value="P:calcium ion transmembrane transport"/>
    <property type="evidence" value="ECO:0000314"/>
    <property type="project" value="ARUK-UCL"/>
</dbReference>
<dbReference type="GO" id="GO:0006816">
    <property type="term" value="P:calcium ion transport"/>
    <property type="evidence" value="ECO:0000303"/>
    <property type="project" value="UniProtKB"/>
</dbReference>
<dbReference type="GO" id="GO:0006874">
    <property type="term" value="P:intracellular calcium ion homeostasis"/>
    <property type="evidence" value="ECO:0000314"/>
    <property type="project" value="ARUK-UCL"/>
</dbReference>
<dbReference type="GO" id="GO:0060292">
    <property type="term" value="P:long-term synaptic depression"/>
    <property type="evidence" value="ECO:0000318"/>
    <property type="project" value="GO_Central"/>
</dbReference>
<dbReference type="GO" id="GO:0060291">
    <property type="term" value="P:long-term synaptic potentiation"/>
    <property type="evidence" value="ECO:0000318"/>
    <property type="project" value="GO_Central"/>
</dbReference>
<dbReference type="GO" id="GO:0006811">
    <property type="term" value="P:monoatomic ion transport"/>
    <property type="evidence" value="ECO:0000304"/>
    <property type="project" value="Reactome"/>
</dbReference>
<dbReference type="GO" id="GO:0071805">
    <property type="term" value="P:potassium ion transmembrane transport"/>
    <property type="evidence" value="ECO:0000314"/>
    <property type="project" value="ARUK-UCL"/>
</dbReference>
<dbReference type="GO" id="GO:0009642">
    <property type="term" value="P:response to light intensity"/>
    <property type="evidence" value="ECO:0000303"/>
    <property type="project" value="UniProtKB"/>
</dbReference>
<dbReference type="GO" id="GO:0035725">
    <property type="term" value="P:sodium ion transmembrane transport"/>
    <property type="evidence" value="ECO:0000314"/>
    <property type="project" value="ARUK-UCL"/>
</dbReference>
<dbReference type="GO" id="GO:0007601">
    <property type="term" value="P:visual perception"/>
    <property type="evidence" value="ECO:0000303"/>
    <property type="project" value="UniProtKB"/>
</dbReference>
<dbReference type="FunFam" id="1.20.1420.30:FF:000002">
    <property type="entry name" value="Sodium/potassium/calcium exchanger 2 isoform 1"/>
    <property type="match status" value="1"/>
</dbReference>
<dbReference type="FunFam" id="1.20.1420.30:FF:000004">
    <property type="entry name" value="Sodium/potassium/calcium exchanger 2 isoform 1"/>
    <property type="match status" value="1"/>
</dbReference>
<dbReference type="Gene3D" id="1.20.1420.30">
    <property type="entry name" value="NCX, central ion-binding region"/>
    <property type="match status" value="2"/>
</dbReference>
<dbReference type="InterPro" id="IPR004481">
    <property type="entry name" value="K/Na/Ca-exchanger"/>
</dbReference>
<dbReference type="InterPro" id="IPR004837">
    <property type="entry name" value="NaCa_Exmemb"/>
</dbReference>
<dbReference type="InterPro" id="IPR044880">
    <property type="entry name" value="NCX_ion-bd_dom_sf"/>
</dbReference>
<dbReference type="InterPro" id="IPR004817">
    <property type="entry name" value="SLC24A1"/>
</dbReference>
<dbReference type="NCBIfam" id="TIGR00927">
    <property type="entry name" value="2A1904"/>
    <property type="match status" value="1"/>
</dbReference>
<dbReference type="NCBIfam" id="TIGR00367">
    <property type="entry name" value="calcium/sodium antiporter"/>
    <property type="match status" value="1"/>
</dbReference>
<dbReference type="PANTHER" id="PTHR10846">
    <property type="entry name" value="SODIUM/POTASSIUM/CALCIUM EXCHANGER"/>
    <property type="match status" value="1"/>
</dbReference>
<dbReference type="PANTHER" id="PTHR10846:SF36">
    <property type="entry name" value="SODIUM_POTASSIUM_CALCIUM EXCHANGER 1"/>
    <property type="match status" value="1"/>
</dbReference>
<dbReference type="Pfam" id="PF01699">
    <property type="entry name" value="Na_Ca_ex"/>
    <property type="match status" value="2"/>
</dbReference>
<feature type="chain" id="PRO_0000223303" description="Sodium/potassium/calcium exchanger 1">
    <location>
        <begin position="1"/>
        <end position="1099"/>
    </location>
</feature>
<feature type="signal peptide" description="Not cleaved" evidence="3">
    <location>
        <begin position="1"/>
        <end status="unknown"/>
    </location>
</feature>
<feature type="topological domain" description="Extracellular" evidence="1">
    <location>
        <begin position="1"/>
        <end position="452"/>
    </location>
</feature>
<feature type="transmembrane region" description="Helical" evidence="1">
    <location>
        <begin position="453"/>
        <end position="473"/>
    </location>
</feature>
<feature type="topological domain" description="Cytoplasmic" evidence="1">
    <location>
        <begin position="474"/>
        <end position="497"/>
    </location>
</feature>
<feature type="transmembrane region" description="Helical" evidence="1">
    <location>
        <begin position="498"/>
        <end position="518"/>
    </location>
</feature>
<feature type="topological domain" description="Extracellular" evidence="1">
    <location>
        <begin position="519"/>
        <end position="522"/>
    </location>
</feature>
<feature type="transmembrane region" description="Helical" evidence="1">
    <location>
        <begin position="523"/>
        <end position="543"/>
    </location>
</feature>
<feature type="topological domain" description="Cytoplasmic" evidence="1">
    <location>
        <begin position="544"/>
        <end position="563"/>
    </location>
</feature>
<feature type="transmembrane region" description="Helical" evidence="1">
    <location>
        <begin position="564"/>
        <end position="584"/>
    </location>
</feature>
<feature type="topological domain" description="Extracellular" evidence="1">
    <location>
        <position position="585"/>
    </location>
</feature>
<feature type="transmembrane region" description="Helical" evidence="1">
    <location>
        <begin position="586"/>
        <end position="606"/>
    </location>
</feature>
<feature type="topological domain" description="Cytoplasmic" evidence="1">
    <location>
        <begin position="607"/>
        <end position="907"/>
    </location>
</feature>
<feature type="transmembrane region" description="Helical" evidence="1">
    <location>
        <begin position="908"/>
        <end position="928"/>
    </location>
</feature>
<feature type="topological domain" description="Extracellular" evidence="1">
    <location>
        <begin position="929"/>
        <end position="935"/>
    </location>
</feature>
<feature type="transmembrane region" description="Helical" evidence="1">
    <location>
        <begin position="936"/>
        <end position="956"/>
    </location>
</feature>
<feature type="topological domain" description="Cytoplasmic" evidence="1">
    <location>
        <begin position="957"/>
        <end position="971"/>
    </location>
</feature>
<feature type="transmembrane region" description="Helical" evidence="1">
    <location>
        <begin position="972"/>
        <end position="992"/>
    </location>
</feature>
<feature type="topological domain" description="Extracellular" evidence="1">
    <location>
        <begin position="993"/>
        <end position="1010"/>
    </location>
</feature>
<feature type="transmembrane region" description="Helical" evidence="1">
    <location>
        <begin position="1011"/>
        <end position="1031"/>
    </location>
</feature>
<feature type="topological domain" description="Cytoplasmic" evidence="1">
    <location>
        <begin position="1032"/>
        <end position="1039"/>
    </location>
</feature>
<feature type="transmembrane region" description="Helical" evidence="1">
    <location>
        <begin position="1040"/>
        <end position="1060"/>
    </location>
</feature>
<feature type="topological domain" description="Extracellular" evidence="1">
    <location>
        <begin position="1061"/>
        <end position="1068"/>
    </location>
</feature>
<feature type="transmembrane region" description="Helical" evidence="1">
    <location>
        <begin position="1069"/>
        <end position="1089"/>
    </location>
</feature>
<feature type="topological domain" description="Cytoplasmic" evidence="1">
    <location>
        <begin position="1090"/>
        <end position="1099"/>
    </location>
</feature>
<feature type="repeat" description="Alpha-1">
    <location>
        <begin position="494"/>
        <end position="534"/>
    </location>
</feature>
<feature type="repeat" description="Alpha-2">
    <location>
        <begin position="979"/>
        <end position="1010"/>
    </location>
</feature>
<feature type="region of interest" description="Disordered" evidence="2">
    <location>
        <begin position="123"/>
        <end position="150"/>
    </location>
</feature>
<feature type="region of interest" description="Disordered" evidence="2">
    <location>
        <begin position="169"/>
        <end position="199"/>
    </location>
</feature>
<feature type="region of interest" description="Disordered" evidence="2">
    <location>
        <begin position="284"/>
        <end position="304"/>
    </location>
</feature>
<feature type="region of interest" description="Disordered" evidence="2">
    <location>
        <begin position="690"/>
        <end position="901"/>
    </location>
</feature>
<feature type="compositionally biased region" description="Polar residues" evidence="2">
    <location>
        <begin position="123"/>
        <end position="134"/>
    </location>
</feature>
<feature type="compositionally biased region" description="Acidic residues" evidence="2">
    <location>
        <begin position="757"/>
        <end position="769"/>
    </location>
</feature>
<feature type="compositionally biased region" description="Basic and acidic residues" evidence="2">
    <location>
        <begin position="813"/>
        <end position="825"/>
    </location>
</feature>
<feature type="compositionally biased region" description="Basic and acidic residues" evidence="2">
    <location>
        <begin position="835"/>
        <end position="849"/>
    </location>
</feature>
<feature type="compositionally biased region" description="Acidic residues" evidence="2">
    <location>
        <begin position="857"/>
        <end position="892"/>
    </location>
</feature>
<feature type="modified residue" description="Phosphoserine" evidence="1">
    <location>
        <position position="658"/>
    </location>
</feature>
<feature type="modified residue" description="Phosphothreonine" evidence="14">
    <location>
        <position position="724"/>
    </location>
</feature>
<feature type="glycosylation site" description="N-linked (GlcNAc...) asparagine" evidence="1">
    <location>
        <position position="290"/>
    </location>
</feature>
<feature type="splice variant" id="VSP_006160" description="In isoform 2." evidence="8 9">
    <location>
        <begin position="631"/>
        <end position="648"/>
    </location>
</feature>
<feature type="splice variant" id="VSP_054491" description="In isoform 3." evidence="6">
    <location>
        <begin position="932"/>
        <end position="961"/>
    </location>
</feature>
<feature type="sequence variant" id="VAR_050221" description="In dbSNP:rs3743171.">
    <original>T</original>
    <variation>S</variation>
    <location>
        <position position="37"/>
    </location>
</feature>
<feature type="sequence variant" id="VAR_050222" description="In dbSNP:rs34363823.">
    <original>V</original>
    <variation>L</variation>
    <location>
        <position position="311"/>
    </location>
</feature>
<feature type="sequence variant" id="VAR_050223" description="In dbSNP:rs35571449.">
    <original>L</original>
    <variation>V</variation>
    <location>
        <position position="313"/>
    </location>
</feature>
<feature type="sequence conflict" description="In Ref. 2; AAB97832." evidence="11" ref="2">
    <original>V</original>
    <variation>I</variation>
    <location>
        <position position="516"/>
    </location>
</feature>
<protein>
    <recommendedName>
        <fullName>Sodium/potassium/calcium exchanger 1</fullName>
    </recommendedName>
    <alternativeName>
        <fullName evidence="10">Na(+)/K(+)/Ca(2+)-exchange protein 1</fullName>
    </alternativeName>
    <alternativeName>
        <fullName evidence="8">Retinal rod Na-Ca+K exchanger</fullName>
    </alternativeName>
    <alternativeName>
        <fullName>Solute carrier family 24 member 1</fullName>
    </alternativeName>
</protein>
<proteinExistence type="evidence at protein level"/>
<accession>O60721</accession>
<accession>O43485</accession>
<accession>O75184</accession>
<accession>Q17RM9</accession>
<evidence type="ECO:0000255" key="1"/>
<evidence type="ECO:0000256" key="2">
    <source>
        <dbReference type="SAM" id="MobiDB-lite"/>
    </source>
</evidence>
<evidence type="ECO:0000269" key="3">
    <source>
    </source>
</evidence>
<evidence type="ECO:0000269" key="4">
    <source>
    </source>
</evidence>
<evidence type="ECO:0000269" key="5">
    <source>
    </source>
</evidence>
<evidence type="ECO:0000303" key="6">
    <source>
    </source>
</evidence>
<evidence type="ECO:0000303" key="7">
    <source>
    </source>
</evidence>
<evidence type="ECO:0000303" key="8">
    <source>
    </source>
</evidence>
<evidence type="ECO:0000303" key="9">
    <source>
    </source>
</evidence>
<evidence type="ECO:0000303" key="10">
    <source>
    </source>
</evidence>
<evidence type="ECO:0000305" key="11"/>
<evidence type="ECO:0000305" key="12">
    <source>
    </source>
</evidence>
<evidence type="ECO:0000312" key="13">
    <source>
        <dbReference type="HGNC" id="HGNC:10975"/>
    </source>
</evidence>
<evidence type="ECO:0007744" key="14">
    <source>
    </source>
</evidence>
<name>NCKX1_HUMAN</name>
<organism>
    <name type="scientific">Homo sapiens</name>
    <name type="common">Human</name>
    <dbReference type="NCBI Taxonomy" id="9606"/>
    <lineage>
        <taxon>Eukaryota</taxon>
        <taxon>Metazoa</taxon>
        <taxon>Chordata</taxon>
        <taxon>Craniata</taxon>
        <taxon>Vertebrata</taxon>
        <taxon>Euteleostomi</taxon>
        <taxon>Mammalia</taxon>
        <taxon>Eutheria</taxon>
        <taxon>Euarchontoglires</taxon>
        <taxon>Primates</taxon>
        <taxon>Haplorrhini</taxon>
        <taxon>Catarrhini</taxon>
        <taxon>Hominidae</taxon>
        <taxon>Homo</taxon>
    </lineage>
</organism>
<reference key="1">
    <citation type="journal article" date="1998" name="Hum. Genet.">
        <title>Chromosomal localization and genomic organization of the human retinal rod Na-Ca+K exchanger.</title>
        <authorList>
            <person name="Tucker J.E."/>
            <person name="Winkfein R.J."/>
            <person name="Murthy S.K."/>
            <person name="Friedman J.S."/>
            <person name="Walter M.A."/>
            <person name="Demetrick D.J."/>
            <person name="Schnetkamp P.P.M."/>
        </authorList>
    </citation>
    <scope>NUCLEOTIDE SEQUENCE [MRNA] (ISOFORM 1)</scope>
    <source>
        <tissue>Retina</tissue>
    </source>
</reference>
<reference key="2">
    <citation type="journal article" date="1998" name="Invest. Ophthalmol. Vis. Sci.">
        <title>cDNA cloning of the human retinal rod Na-Ca + K exchanger: comparison with a revised bovine sequence.</title>
        <authorList>
            <person name="Tucker J.E."/>
            <person name="Winkfein R.J."/>
            <person name="Cooper C.B."/>
            <person name="Schnetkamp P.P.M."/>
        </authorList>
    </citation>
    <scope>NUCLEOTIDE SEQUENCE [MRNA] (ISOFORM 2)</scope>
    <source>
        <tissue>Retina</tissue>
    </source>
</reference>
<reference key="3">
    <citation type="journal article" date="2006" name="Nature">
        <title>Analysis of the DNA sequence and duplication history of human chromosome 15.</title>
        <authorList>
            <person name="Zody M.C."/>
            <person name="Garber M."/>
            <person name="Sharpe T."/>
            <person name="Young S.K."/>
            <person name="Rowen L."/>
            <person name="O'Neill K."/>
            <person name="Whittaker C.A."/>
            <person name="Kamal M."/>
            <person name="Chang J.L."/>
            <person name="Cuomo C.A."/>
            <person name="Dewar K."/>
            <person name="FitzGerald M.G."/>
            <person name="Kodira C.D."/>
            <person name="Madan A."/>
            <person name="Qin S."/>
            <person name="Yang X."/>
            <person name="Abbasi N."/>
            <person name="Abouelleil A."/>
            <person name="Arachchi H.M."/>
            <person name="Baradarani L."/>
            <person name="Birditt B."/>
            <person name="Bloom S."/>
            <person name="Bloom T."/>
            <person name="Borowsky M.L."/>
            <person name="Burke J."/>
            <person name="Butler J."/>
            <person name="Cook A."/>
            <person name="DeArellano K."/>
            <person name="DeCaprio D."/>
            <person name="Dorris L. III"/>
            <person name="Dors M."/>
            <person name="Eichler E.E."/>
            <person name="Engels R."/>
            <person name="Fahey J."/>
            <person name="Fleetwood P."/>
            <person name="Friedman C."/>
            <person name="Gearin G."/>
            <person name="Hall J.L."/>
            <person name="Hensley G."/>
            <person name="Johnson E."/>
            <person name="Jones C."/>
            <person name="Kamat A."/>
            <person name="Kaur A."/>
            <person name="Locke D.P."/>
            <person name="Madan A."/>
            <person name="Munson G."/>
            <person name="Jaffe D.B."/>
            <person name="Lui A."/>
            <person name="Macdonald P."/>
            <person name="Mauceli E."/>
            <person name="Naylor J.W."/>
            <person name="Nesbitt R."/>
            <person name="Nicol R."/>
            <person name="O'Leary S.B."/>
            <person name="Ratcliffe A."/>
            <person name="Rounsley S."/>
            <person name="She X."/>
            <person name="Sneddon K.M.B."/>
            <person name="Stewart S."/>
            <person name="Sougnez C."/>
            <person name="Stone S.M."/>
            <person name="Topham K."/>
            <person name="Vincent D."/>
            <person name="Wang S."/>
            <person name="Zimmer A.R."/>
            <person name="Birren B.W."/>
            <person name="Hood L."/>
            <person name="Lander E.S."/>
            <person name="Nusbaum C."/>
        </authorList>
    </citation>
    <scope>NUCLEOTIDE SEQUENCE [LARGE SCALE GENOMIC DNA]</scope>
</reference>
<reference key="4">
    <citation type="journal article" date="2004" name="Genome Res.">
        <title>The status, quality, and expansion of the NIH full-length cDNA project: the Mammalian Gene Collection (MGC).</title>
        <authorList>
            <consortium name="The MGC Project Team"/>
        </authorList>
    </citation>
    <scope>NUCLEOTIDE SEQUENCE [LARGE SCALE MRNA] (ISOFORM 3)</scope>
    <source>
        <tissue>Heart</tissue>
        <tissue>Lung</tissue>
    </source>
</reference>
<reference key="5">
    <citation type="journal article" date="1998" name="DNA Res.">
        <title>Prediction of the coding sequences of unidentified human genes. X. The complete sequences of 100 new cDNA clones from brain which can code for large proteins in vitro.</title>
        <authorList>
            <person name="Ishikawa K."/>
            <person name="Nagase T."/>
            <person name="Suyama M."/>
            <person name="Miyajima N."/>
            <person name="Tanaka A."/>
            <person name="Kotani H."/>
            <person name="Nomura N."/>
            <person name="Ohara O."/>
        </authorList>
    </citation>
    <scope>NUCLEOTIDE SEQUENCE [LARGE SCALE MRNA] OF 1-1003 (ISOFORM 2)</scope>
    <source>
        <tissue>Brain</tissue>
    </source>
</reference>
<reference key="6">
    <citation type="journal article" date="1999" name="J. Biol. Chem.">
        <title>The retinal rod Na(+)/Ca(2+),K(+) exchanger contains a noncleaved signal sequence required for translocation of the N-terminus.</title>
        <authorList>
            <person name="McKiernan C.J."/>
            <person name="Friedlander M."/>
        </authorList>
    </citation>
    <scope>FUNCTION OF THE N-TERMINUS IN TARGETING</scope>
</reference>
<reference key="7">
    <citation type="journal article" date="2009" name="Sci. Signal.">
        <title>Quantitative phosphoproteomic analysis of T cell receptor signaling reveals system-wide modulation of protein-protein interactions.</title>
        <authorList>
            <person name="Mayya V."/>
            <person name="Lundgren D.H."/>
            <person name="Hwang S.-I."/>
            <person name="Rezaul K."/>
            <person name="Wu L."/>
            <person name="Eng J.K."/>
            <person name="Rodionov V."/>
            <person name="Han D.K."/>
        </authorList>
    </citation>
    <scope>PHOSPHORYLATION [LARGE SCALE ANALYSIS] AT THR-724</scope>
    <scope>IDENTIFICATION BY MASS SPECTROMETRY [LARGE SCALE ANALYSIS]</scope>
    <source>
        <tissue>Leukemic T-cell</tissue>
    </source>
</reference>
<reference key="8">
    <citation type="journal article" date="2010" name="Am. J. Hum. Genet.">
        <title>A mutation in SLC24A1 implicated in autosomal-recessive congenital stationary night blindness.</title>
        <authorList>
            <person name="Riazuddin S.A."/>
            <person name="Shahzadi A."/>
            <person name="Zeitz C."/>
            <person name="Ahmed Z.M."/>
            <person name="Ayyagari R."/>
            <person name="Chavali V.R."/>
            <person name="Ponferrada V.G."/>
            <person name="Audo I."/>
            <person name="Michiels C."/>
            <person name="Lancelot M.E."/>
            <person name="Nasir I.A."/>
            <person name="Zafar A.U."/>
            <person name="Khan S.N."/>
            <person name="Husnain T."/>
            <person name="Jiao X."/>
            <person name="MacDonald I.M."/>
            <person name="Riazuddin S."/>
            <person name="Sieving P.A."/>
            <person name="Katsanis N."/>
            <person name="Hejtmancik J.F."/>
        </authorList>
    </citation>
    <scope>FUNCTION</scope>
    <scope>TISSUE SPECIFICITY</scope>
    <scope>INVOLVEMENT IN CSNB1D</scope>
</reference>
<reference key="9">
    <citation type="journal article" date="2016" name="Cell Calcium">
        <title>Cation dependencies and turnover rates of the human K(+)-dependent Na(+)-Ca(2+) exchangers NCKX1, NCKX2, NCKX3 and NCKX4.</title>
        <authorList>
            <person name="Jalloul A.H."/>
            <person name="Szerencsei R.T."/>
            <person name="Schnetkamp P.P."/>
        </authorList>
    </citation>
    <scope>FUNCTION</scope>
    <scope>TRANSPORTER ACTIVITY</scope>
    <scope>SUBCELLULAR LOCATION</scope>
</reference>
<comment type="function">
    <text evidence="4 5">Calcium, potassium:sodium antiporter that transports 1 Ca(2+) and 1 K(+) in exchange for 4 Na(+) (PubMed:26631410). Critical component of the visual transduction cascade, controlling the calcium concentration of outer segments during light and darkness (PubMed:20850105). Light causes a rapid lowering of cytosolic free calcium in the outer segment of both retinal rod and cone photoreceptors and the light-induced lowering of calcium is caused by extrusion via this protein which plays a key role in the process of light adaptation (PubMed:20850105).</text>
</comment>
<comment type="catalytic activity">
    <reaction evidence="12">
        <text>Ca(2+)(out) + K(+)(out) + 4 Na(+)(in) = Ca(2+)(in) + K(+)(in) + 4 Na(+)(out)</text>
        <dbReference type="Rhea" id="RHEA:69967"/>
        <dbReference type="ChEBI" id="CHEBI:29101"/>
        <dbReference type="ChEBI" id="CHEBI:29103"/>
        <dbReference type="ChEBI" id="CHEBI:29108"/>
    </reaction>
</comment>
<comment type="interaction">
    <interactant intactId="EBI-1753504">
        <id>O60721</id>
    </interactant>
    <interactant intactId="EBI-389883">
        <id>P16333</id>
        <label>NCK1</label>
    </interactant>
    <organismsDiffer>false</organismsDiffer>
    <experiments>3</experiments>
</comment>
<comment type="subcellular location">
    <subcellularLocation>
        <location evidence="5">Cell membrane</location>
        <topology evidence="1">Multi-pass membrane protein</topology>
    </subcellularLocation>
</comment>
<comment type="alternative products">
    <event type="alternative splicing"/>
    <isoform>
        <id>O60721-1</id>
        <name>1</name>
        <sequence type="displayed"/>
    </isoform>
    <isoform>
        <id>O60721-2</id>
        <name>2</name>
        <sequence type="described" ref="VSP_006160"/>
    </isoform>
    <isoform>
        <id>O60721-3</id>
        <name>3</name>
        <sequence type="described" ref="VSP_054491"/>
    </isoform>
</comment>
<comment type="tissue specificity">
    <text evidence="4">Expressed in the retina, particularly in the inner segment, outer and inner nuclear layers, and ganglion cell layer.</text>
</comment>
<comment type="PTM">
    <text evidence="3">The uncleaved signal sequence is required for efficient membrane targeting and proper membrane integration.</text>
</comment>
<comment type="disease" evidence="4">
    <disease id="DI-03077">
        <name>Night blindness, congenital stationary, 1D</name>
        <acronym>CSNB1D</acronym>
        <description>An autosomal recessive form of congenital stationary night blindness, a non-progressive retinal disorder characterized by impaired night vision. CSNB1D is characterized by a Riggs type of electroretinogram (proportionally reduced a- and b-waves). Patients have visual acuity within the normal range and no symptoms of myopia and/or nystagmus.</description>
        <dbReference type="MIM" id="613830"/>
    </disease>
    <text>The disease is caused by variants affecting the gene represented in this entry.</text>
</comment>
<comment type="similarity">
    <text evidence="11">Belongs to the Ca(2+):cation antiporter (CaCA) (TC 2.A.19) family. SLC24A subfamily.</text>
</comment>
<keyword id="KW-0025">Alternative splicing</keyword>
<keyword id="KW-0050">Antiport</keyword>
<keyword id="KW-0106">Calcium</keyword>
<keyword id="KW-0109">Calcium transport</keyword>
<keyword id="KW-1003">Cell membrane</keyword>
<keyword id="KW-1014">Congenital stationary night blindness</keyword>
<keyword id="KW-0325">Glycoprotein</keyword>
<keyword id="KW-0406">Ion transport</keyword>
<keyword id="KW-0472">Membrane</keyword>
<keyword id="KW-0597">Phosphoprotein</keyword>
<keyword id="KW-1267">Proteomics identification</keyword>
<keyword id="KW-1185">Reference proteome</keyword>
<keyword id="KW-0677">Repeat</keyword>
<keyword id="KW-0716">Sensory transduction</keyword>
<keyword id="KW-0732">Signal</keyword>
<keyword id="KW-0769">Symport</keyword>
<keyword id="KW-0812">Transmembrane</keyword>
<keyword id="KW-1133">Transmembrane helix</keyword>
<keyword id="KW-0813">Transport</keyword>
<keyword id="KW-0844">Vision</keyword>
<sequence length="1099" mass="121374">MGKLIRMGPQERWLLRTKRLHWSRLLFLLGMLIIGSTYQHLRRPRGLSSLWAAVSSHQPIKLASRDLSSEEMMMMSSSPSKPSSEMGGKMLVPQASVGSDEATLSMTVENIPSMPKRTAKMIPTTTKNNYSPTAAGTERRKEDTPTSSRTLTYYTSTSSRQIVKKYTPTPRGEMKSYSPTQVREKVKYTPSPRGRRVGTYVPSTFMTMETSHAITPRTTVKDSDITATYKILETNSLKRIMEETTPTTLKGMFDSTPTFLTHEVEANVLTSPRSVMEKNNLFPPRRVESNSSAHPWGLVGKSNPKTPQGTVLLHTPATSEGQVTISTMTGSSPAETKAFTAAWSLRNPSPRTSVSAIKTAPAIVWRLAKKPSTAPSTSTTPTVRAKLTMQVHHCVVVKPTPAMLTTPSPSLTTALLPEELSPSPSVLPPSLPDLHPKGEYPPDLFSVEERRQGWVVLHVFGMMYVFVALAIVCDEYFVPALGVITDKLQISEDVAGATFMAAGGSAPELFTSLIGVFISHSNVGIGTIVGSAVFNILFVIGTCSLFSREILNLTWWPLFRDVSFYILDLIMLILFFLDSLIAWWESLLLLLAYAFYVFTMKWNKHIEVWVKEQLSRRPVAKVMALEDLSKPGDGAIAVDELQDNKKLKLPSLLTRGSSSTSLHNSTIRSTIYQLMLHSLDPLREVRLAKEKEEESLNQGARAQPQAKAESKPEEEEPAKLPAVTVTPAPVPDIKGDQKENPGGQEDVAEAESTGEMPGEEGETAGEGETEEKSGGETQPEGEGETETQGKGEECEDENEAEGKGDNEGEDEGEIHAEDGEMKGNEGETESQELSAENHGEAKNDEKGVEDGGGSDGGDSEEEEEEEEEQEEEEEEEEQEEEEEEEEEEEEKGNEEPLSLDWPETRQKQAIYLFLLPIVFPLWLTVPDVRRQESRKFFVFTFLGSIMWIAMFSYLMVWWAHQVGETIGISEEIMGLTILAAGTSIPDLITSVIVARKGLGDMAVSSSVGSNIFDITVGLPVPWLLFSLINGLQPVPVSSNGLFCAIVLLFLMLLFVISSIASCKWRMNKILGFTMFLLYFVFLIISVMLEDRIISCPVSV</sequence>